<reference key="1">
    <citation type="journal article" date="1996" name="Proc. Natl. Acad. Sci. U.S.A.">
        <title>Pollen specific expression of maize genes encoding actin depolymerizing factor-like proteins.</title>
        <authorList>
            <person name="Lopez I."/>
            <person name="Anthony R.G."/>
            <person name="Maciver S.K."/>
            <person name="Jiang C.J."/>
            <person name="Khan S."/>
            <person name="Weeds A.G."/>
            <person name="Hussey P.J."/>
        </authorList>
    </citation>
    <scope>NUCLEOTIDE SEQUENCE [MRNA]</scope>
    <source>
        <strain>cv. A188</strain>
        <tissue>Pollen</tissue>
    </source>
</reference>
<gene>
    <name type="primary">ADF2</name>
    <name type="synonym">ABP2</name>
</gene>
<organism>
    <name type="scientific">Zea mays</name>
    <name type="common">Maize</name>
    <dbReference type="NCBI Taxonomy" id="4577"/>
    <lineage>
        <taxon>Eukaryota</taxon>
        <taxon>Viridiplantae</taxon>
        <taxon>Streptophyta</taxon>
        <taxon>Embryophyta</taxon>
        <taxon>Tracheophyta</taxon>
        <taxon>Spermatophyta</taxon>
        <taxon>Magnoliopsida</taxon>
        <taxon>Liliopsida</taxon>
        <taxon>Poales</taxon>
        <taxon>Poaceae</taxon>
        <taxon>PACMAD clade</taxon>
        <taxon>Panicoideae</taxon>
        <taxon>Andropogonodae</taxon>
        <taxon>Andropogoneae</taxon>
        <taxon>Tripsacinae</taxon>
        <taxon>Zea</taxon>
    </lineage>
</organism>
<dbReference type="EMBL" id="X97725">
    <property type="protein sequence ID" value="CAA66310.1"/>
    <property type="molecule type" value="mRNA"/>
</dbReference>
<dbReference type="PIR" id="T02883">
    <property type="entry name" value="T02883"/>
</dbReference>
<dbReference type="RefSeq" id="NP_001105590.1">
    <property type="nucleotide sequence ID" value="NM_001112120.1"/>
</dbReference>
<dbReference type="SMR" id="Q43694"/>
<dbReference type="FunCoup" id="Q43694">
    <property type="interactions" value="2609"/>
</dbReference>
<dbReference type="STRING" id="4577.Q43694"/>
<dbReference type="PaxDb" id="4577-GRMZM2G097122_P01"/>
<dbReference type="EnsemblPlants" id="Zm00001eb105010_T001">
    <property type="protein sequence ID" value="Zm00001eb105010_P001"/>
    <property type="gene ID" value="Zm00001eb105010"/>
</dbReference>
<dbReference type="GeneID" id="542584"/>
<dbReference type="Gramene" id="Zm00001eb105010_T001">
    <property type="protein sequence ID" value="Zm00001eb105010_P001"/>
    <property type="gene ID" value="Zm00001eb105010"/>
</dbReference>
<dbReference type="KEGG" id="zma:542584"/>
<dbReference type="eggNOG" id="KOG1735">
    <property type="taxonomic scope" value="Eukaryota"/>
</dbReference>
<dbReference type="HOGENOM" id="CLU_094004_2_2_1"/>
<dbReference type="InParanoid" id="Q43694"/>
<dbReference type="OrthoDB" id="10249245at2759"/>
<dbReference type="Proteomes" id="UP000007305">
    <property type="component" value="Chromosome 2"/>
</dbReference>
<dbReference type="ExpressionAtlas" id="Q43694">
    <property type="expression patterns" value="baseline and differential"/>
</dbReference>
<dbReference type="GO" id="GO:0015629">
    <property type="term" value="C:actin cytoskeleton"/>
    <property type="evidence" value="ECO:0000318"/>
    <property type="project" value="GO_Central"/>
</dbReference>
<dbReference type="GO" id="GO:0005737">
    <property type="term" value="C:cytoplasm"/>
    <property type="evidence" value="ECO:0000318"/>
    <property type="project" value="GO_Central"/>
</dbReference>
<dbReference type="GO" id="GO:0051015">
    <property type="term" value="F:actin filament binding"/>
    <property type="evidence" value="ECO:0000318"/>
    <property type="project" value="GO_Central"/>
</dbReference>
<dbReference type="GO" id="GO:0030042">
    <property type="term" value="P:actin filament depolymerization"/>
    <property type="evidence" value="ECO:0000318"/>
    <property type="project" value="GO_Central"/>
</dbReference>
<dbReference type="CDD" id="cd11286">
    <property type="entry name" value="ADF_cofilin_like"/>
    <property type="match status" value="1"/>
</dbReference>
<dbReference type="Gene3D" id="3.40.20.10">
    <property type="entry name" value="Severin"/>
    <property type="match status" value="1"/>
</dbReference>
<dbReference type="InterPro" id="IPR002108">
    <property type="entry name" value="ADF-H"/>
</dbReference>
<dbReference type="InterPro" id="IPR029006">
    <property type="entry name" value="ADF-H/Gelsolin-like_dom_sf"/>
</dbReference>
<dbReference type="InterPro" id="IPR017904">
    <property type="entry name" value="ADF/Cofilin"/>
</dbReference>
<dbReference type="PANTHER" id="PTHR11913">
    <property type="entry name" value="COFILIN-RELATED"/>
    <property type="match status" value="1"/>
</dbReference>
<dbReference type="Pfam" id="PF00241">
    <property type="entry name" value="Cofilin_ADF"/>
    <property type="match status" value="1"/>
</dbReference>
<dbReference type="SMART" id="SM00102">
    <property type="entry name" value="ADF"/>
    <property type="match status" value="1"/>
</dbReference>
<dbReference type="SUPFAM" id="SSF55753">
    <property type="entry name" value="Actin depolymerizing proteins"/>
    <property type="match status" value="1"/>
</dbReference>
<dbReference type="PROSITE" id="PS51263">
    <property type="entry name" value="ADF_H"/>
    <property type="match status" value="1"/>
</dbReference>
<keyword id="KW-0009">Actin-binding</keyword>
<keyword id="KW-1185">Reference proteome</keyword>
<comment type="function">
    <text evidence="1">Actin-depolymerizing protein. Severs actin filaments (F-actin) and binds to actin monomers (By similarity).</text>
</comment>
<comment type="tissue specificity">
    <text>Expressed in pollen.</text>
</comment>
<comment type="similarity">
    <text evidence="3">Belongs to the actin-binding proteins ADF family.</text>
</comment>
<name>ADF2_MAIZE</name>
<sequence>MANSSSGLAVSDECKVKFRDLKARRSFRFIVFRIDDKDMEIKVDRLGEPNQGYGDFTDSLPADECRYAIYDLDFTTVENCQKSKIFFFSWSPDTARTRSKMLYASSKDRFRRELDGIQCEIQATDPSEMSLDIVKSRTN</sequence>
<evidence type="ECO:0000250" key="1"/>
<evidence type="ECO:0000255" key="2">
    <source>
        <dbReference type="PROSITE-ProRule" id="PRU00599"/>
    </source>
</evidence>
<evidence type="ECO:0000305" key="3"/>
<protein>
    <recommendedName>
        <fullName>Actin-depolymerizing factor 2</fullName>
        <shortName>ADF-2</shortName>
        <shortName>ZmADF2</shortName>
    </recommendedName>
    <alternativeName>
        <fullName>ZmABP2</fullName>
    </alternativeName>
</protein>
<feature type="chain" id="PRO_0000214933" description="Actin-depolymerizing factor 2">
    <location>
        <begin position="1"/>
        <end position="139"/>
    </location>
</feature>
<feature type="domain" description="ADF-H" evidence="2">
    <location>
        <begin position="7"/>
        <end position="139"/>
    </location>
</feature>
<proteinExistence type="evidence at transcript level"/>
<accession>Q43694</accession>